<dbReference type="EMBL" id="X58924">
    <property type="protein sequence ID" value="CAA41725.1"/>
    <property type="molecule type" value="Genomic_DNA"/>
</dbReference>
<dbReference type="EMBL" id="CP001956">
    <property type="protein sequence ID" value="ADE05052.1"/>
    <property type="molecule type" value="Genomic_DNA"/>
</dbReference>
<dbReference type="PIR" id="S34137">
    <property type="entry name" value="S34137"/>
</dbReference>
<dbReference type="RefSeq" id="WP_004043001.1">
    <property type="nucleotide sequence ID" value="NC_013967.1"/>
</dbReference>
<dbReference type="SMR" id="P41197"/>
<dbReference type="STRING" id="309800.HVO_2755"/>
<dbReference type="PaxDb" id="309800-C498_09064"/>
<dbReference type="EnsemblBacteria" id="ADE05052">
    <property type="protein sequence ID" value="ADE05052"/>
    <property type="gene ID" value="HVO_2755"/>
</dbReference>
<dbReference type="GeneID" id="8924435"/>
<dbReference type="KEGG" id="hvo:HVO_2755"/>
<dbReference type="eggNOG" id="arCOG04287">
    <property type="taxonomic scope" value="Archaea"/>
</dbReference>
<dbReference type="HOGENOM" id="CLU_114656_2_0_2"/>
<dbReference type="OrthoDB" id="3337at2157"/>
<dbReference type="Proteomes" id="UP000008243">
    <property type="component" value="Chromosome"/>
</dbReference>
<dbReference type="GO" id="GO:1990904">
    <property type="term" value="C:ribonucleoprotein complex"/>
    <property type="evidence" value="ECO:0007669"/>
    <property type="project" value="UniProtKB-KW"/>
</dbReference>
<dbReference type="GO" id="GO:0005840">
    <property type="term" value="C:ribosome"/>
    <property type="evidence" value="ECO:0007669"/>
    <property type="project" value="UniProtKB-KW"/>
</dbReference>
<dbReference type="GO" id="GO:0003735">
    <property type="term" value="F:structural constituent of ribosome"/>
    <property type="evidence" value="ECO:0007669"/>
    <property type="project" value="InterPro"/>
</dbReference>
<dbReference type="GO" id="GO:0006414">
    <property type="term" value="P:translational elongation"/>
    <property type="evidence" value="ECO:0007669"/>
    <property type="project" value="InterPro"/>
</dbReference>
<dbReference type="FunFam" id="1.10.10.1410:FF:000002">
    <property type="entry name" value="60S acidic ribosomal protein P2"/>
    <property type="match status" value="1"/>
</dbReference>
<dbReference type="Gene3D" id="1.10.10.1410">
    <property type="match status" value="1"/>
</dbReference>
<dbReference type="HAMAP" id="MF_01478">
    <property type="entry name" value="Ribosomal_L12_arch"/>
    <property type="match status" value="1"/>
</dbReference>
<dbReference type="InterPro" id="IPR038716">
    <property type="entry name" value="P1/P2_N_sf"/>
</dbReference>
<dbReference type="InterPro" id="IPR027534">
    <property type="entry name" value="Ribosomal_P1/P2"/>
</dbReference>
<dbReference type="InterPro" id="IPR022295">
    <property type="entry name" value="Ribosomal_P1_arc"/>
</dbReference>
<dbReference type="NCBIfam" id="TIGR03685">
    <property type="entry name" value="ribo_P1_arch"/>
    <property type="match status" value="1"/>
</dbReference>
<dbReference type="Pfam" id="PF00428">
    <property type="entry name" value="Ribosomal_60s"/>
    <property type="match status" value="1"/>
</dbReference>
<organism>
    <name type="scientific">Haloferax volcanii (strain ATCC 29605 / DSM 3757 / JCM 8879 / NBRC 14742 / NCIMB 2012 / VKM B-1768 / DS2)</name>
    <name type="common">Halobacterium volcanii</name>
    <dbReference type="NCBI Taxonomy" id="309800"/>
    <lineage>
        <taxon>Archaea</taxon>
        <taxon>Methanobacteriati</taxon>
        <taxon>Methanobacteriota</taxon>
        <taxon>Stenosarchaea group</taxon>
        <taxon>Halobacteria</taxon>
        <taxon>Halobacteriales</taxon>
        <taxon>Haloferacaceae</taxon>
        <taxon>Haloferax</taxon>
    </lineage>
</organism>
<proteinExistence type="inferred from homology"/>
<protein>
    <recommendedName>
        <fullName evidence="1">Large ribosomal subunit protein P1</fullName>
    </recommendedName>
    <alternativeName>
        <fullName evidence="1">50S ribosomal protein L12</fullName>
    </alternativeName>
</protein>
<name>RL12_HALVD</name>
<gene>
    <name evidence="1" type="primary">rpl12</name>
    <name type="ordered locus">HVO_2755</name>
</gene>
<feature type="chain" id="PRO_0000157629" description="Large ribosomal subunit protein P1">
    <location>
        <begin position="1"/>
        <end position="113"/>
    </location>
</feature>
<feature type="region of interest" description="Disordered" evidence="2">
    <location>
        <begin position="56"/>
        <end position="113"/>
    </location>
</feature>
<feature type="compositionally biased region" description="Low complexity" evidence="2">
    <location>
        <begin position="56"/>
        <end position="66"/>
    </location>
</feature>
<feature type="compositionally biased region" description="Acidic residues" evidence="2">
    <location>
        <begin position="74"/>
        <end position="105"/>
    </location>
</feature>
<accession>P41197</accession>
<accession>D4GWB6</accession>
<comment type="function">
    <text evidence="1">Forms part of the ribosomal stalk, playing a central role in the interaction of the ribosome with GTP-bound translation factors.</text>
</comment>
<comment type="subunit">
    <text evidence="1">Part of the 50S ribosomal subunit. Homodimer, it forms part of the ribosomal stalk which helps the ribosome interact with GTP-bound translation factors. Forms a heptameric uL10/P0(P1)2(P1)2(P1)2 complex, where uL10/P0 forms an elongated spine to which the P1 dimers bind in a sequential fashion.</text>
</comment>
<comment type="similarity">
    <text evidence="1">Belongs to the eukaryotic ribosomal protein P1/P2 family.</text>
</comment>
<keyword id="KW-1185">Reference proteome</keyword>
<keyword id="KW-0687">Ribonucleoprotein</keyword>
<keyword id="KW-0689">Ribosomal protein</keyword>
<sequence length="113" mass="11490">MEYVYAALILNESDEEVNEENITAVLEAAGVDVEESRVKALVAALEDVDIEEAIETAAAAPAPAAGGSAGGEVEAADDDDEEDAEEEAADEGGDDDGDDDEEADGEGLGALFG</sequence>
<evidence type="ECO:0000255" key="1">
    <source>
        <dbReference type="HAMAP-Rule" id="MF_01478"/>
    </source>
</evidence>
<evidence type="ECO:0000256" key="2">
    <source>
        <dbReference type="SAM" id="MobiDB-lite"/>
    </source>
</evidence>
<reference key="1">
    <citation type="journal article" date="1996" name="J. Bacteriol.">
        <title>Conserved sequence elements involved in regulation of ribosomal protein gene expression in halophilic archaea.</title>
        <authorList>
            <person name="Shimmin L.C."/>
            <person name="Dennis P.P."/>
        </authorList>
    </citation>
    <scope>NUCLEOTIDE SEQUENCE [GENOMIC DNA]</scope>
    <source>
        <strain>ATCC 29605 / DSM 3757 / JCM 8879 / NBRC 14742 / NCIMB 2012 / VKM B-1768 / DS2</strain>
    </source>
</reference>
<reference key="2">
    <citation type="journal article" date="2010" name="PLoS ONE">
        <title>The complete genome sequence of Haloferax volcanii DS2, a model archaeon.</title>
        <authorList>
            <person name="Hartman A.L."/>
            <person name="Norais C."/>
            <person name="Badger J.H."/>
            <person name="Delmas S."/>
            <person name="Haldenby S."/>
            <person name="Madupu R."/>
            <person name="Robinson J."/>
            <person name="Khouri H."/>
            <person name="Ren Q."/>
            <person name="Lowe T.M."/>
            <person name="Maupin-Furlow J."/>
            <person name="Pohlschroder M."/>
            <person name="Daniels C."/>
            <person name="Pfeiffer F."/>
            <person name="Allers T."/>
            <person name="Eisen J.A."/>
        </authorList>
    </citation>
    <scope>NUCLEOTIDE SEQUENCE [LARGE SCALE GENOMIC DNA]</scope>
    <source>
        <strain>ATCC 29605 / DSM 3757 / JCM 8879 / NBRC 14742 / NCIMB 2012 / VKM B-1768 / DS2</strain>
    </source>
</reference>